<reference key="1">
    <citation type="journal article" date="2007" name="Nat. Biotechnol.">
        <title>Genome sequencing and analysis of the versatile cell factory Aspergillus niger CBS 513.88.</title>
        <authorList>
            <person name="Pel H.J."/>
            <person name="de Winde J.H."/>
            <person name="Archer D.B."/>
            <person name="Dyer P.S."/>
            <person name="Hofmann G."/>
            <person name="Schaap P.J."/>
            <person name="Turner G."/>
            <person name="de Vries R.P."/>
            <person name="Albang R."/>
            <person name="Albermann K."/>
            <person name="Andersen M.R."/>
            <person name="Bendtsen J.D."/>
            <person name="Benen J.A.E."/>
            <person name="van den Berg M."/>
            <person name="Breestraat S."/>
            <person name="Caddick M.X."/>
            <person name="Contreras R."/>
            <person name="Cornell M."/>
            <person name="Coutinho P.M."/>
            <person name="Danchin E.G.J."/>
            <person name="Debets A.J.M."/>
            <person name="Dekker P."/>
            <person name="van Dijck P.W.M."/>
            <person name="van Dijk A."/>
            <person name="Dijkhuizen L."/>
            <person name="Driessen A.J.M."/>
            <person name="d'Enfert C."/>
            <person name="Geysens S."/>
            <person name="Goosen C."/>
            <person name="Groot G.S.P."/>
            <person name="de Groot P.W.J."/>
            <person name="Guillemette T."/>
            <person name="Henrissat B."/>
            <person name="Herweijer M."/>
            <person name="van den Hombergh J.P.T.W."/>
            <person name="van den Hondel C.A.M.J.J."/>
            <person name="van der Heijden R.T.J.M."/>
            <person name="van der Kaaij R.M."/>
            <person name="Klis F.M."/>
            <person name="Kools H.J."/>
            <person name="Kubicek C.P."/>
            <person name="van Kuyk P.A."/>
            <person name="Lauber J."/>
            <person name="Lu X."/>
            <person name="van der Maarel M.J.E.C."/>
            <person name="Meulenberg R."/>
            <person name="Menke H."/>
            <person name="Mortimer M.A."/>
            <person name="Nielsen J."/>
            <person name="Oliver S.G."/>
            <person name="Olsthoorn M."/>
            <person name="Pal K."/>
            <person name="van Peij N.N.M.E."/>
            <person name="Ram A.F.J."/>
            <person name="Rinas U."/>
            <person name="Roubos J.A."/>
            <person name="Sagt C.M.J."/>
            <person name="Schmoll M."/>
            <person name="Sun J."/>
            <person name="Ussery D."/>
            <person name="Varga J."/>
            <person name="Vervecken W."/>
            <person name="van de Vondervoort P.J.J."/>
            <person name="Wedler H."/>
            <person name="Woesten H.A.B."/>
            <person name="Zeng A.-P."/>
            <person name="van Ooyen A.J.J."/>
            <person name="Visser J."/>
            <person name="Stam H."/>
        </authorList>
    </citation>
    <scope>NUCLEOTIDE SEQUENCE [LARGE SCALE GENOMIC DNA]</scope>
    <source>
        <strain>ATCC MYA-4892 / CBS 513.88 / FGSC A1513</strain>
    </source>
</reference>
<sequence>MKVPFLQLLCLNAALASANVVKGAAQGFAAGVTGGGDITPSYPKTNEELVSLLESDEPQVVVLTKTFEFIGTEGTTTENGCAPWGTGKSCQLAINSNGWCGKNPVVTITYDNAAKNGIHIKSNKTLVGEGDKGVLSGKGLYFEGGVSNIIVQNIKITNLNPGFVWGGDAFTFFGADLIWIDHCETSLTGRQHYVTGFHPNTRMTWSNNFLNGVTTHSAGCDDHHYWTMELVGPGDQITFQNNYVYHTTGRGPALSGTTLFHAVNSVWSSIPGHAIEGGDKGRGLFEGCFFEDVVEIAPAKPENQLFSASEANAASCKSALGRACQANSYSKSGAFGSSETGFFKDFAGLTIAPAGSATDALAYVPKNCGIGRL</sequence>
<name>PELC_ASPNC</name>
<feature type="signal peptide" evidence="2">
    <location>
        <begin position="1"/>
        <end position="18"/>
    </location>
</feature>
<feature type="chain" id="PRO_5000220580" description="Probable pectin lyase C">
    <location>
        <begin position="19"/>
        <end position="373"/>
    </location>
</feature>
<feature type="active site" evidence="2">
    <location>
        <position position="250"/>
    </location>
</feature>
<feature type="glycosylation site" description="N-linked (GlcNAc...) asparagine" evidence="2">
    <location>
        <position position="123"/>
    </location>
</feature>
<feature type="disulfide bond" evidence="1">
    <location>
        <begin position="81"/>
        <end position="100"/>
    </location>
</feature>
<feature type="disulfide bond" evidence="1">
    <location>
        <begin position="90"/>
        <end position="220"/>
    </location>
</feature>
<feature type="disulfide bond" evidence="1">
    <location>
        <begin position="316"/>
        <end position="324"/>
    </location>
</feature>
<keyword id="KW-0119">Carbohydrate metabolism</keyword>
<keyword id="KW-0961">Cell wall biogenesis/degradation</keyword>
<keyword id="KW-1015">Disulfide bond</keyword>
<keyword id="KW-0325">Glycoprotein</keyword>
<keyword id="KW-0456">Lyase</keyword>
<keyword id="KW-0624">Polysaccharide degradation</keyword>
<keyword id="KW-1185">Reference proteome</keyword>
<keyword id="KW-0964">Secreted</keyword>
<keyword id="KW-0732">Signal</keyword>
<proteinExistence type="inferred from homology"/>
<gene>
    <name type="primary">pelC</name>
    <name type="ORF">An11g04030</name>
</gene>
<accession>A2QW65</accession>
<comment type="function">
    <text evidence="1">Pectinolytic enzymes consist of four classes of enzymes: pectin lyase, polygalacturonase, pectin methylesterase and rhamnogalacturonase. Among pectinolytic enzymes, pectin lyase is the most important in depolymerization of pectin, since it cleaves internal glycosidic bonds of highly methylated pectins (By similarity).</text>
</comment>
<comment type="catalytic activity">
    <reaction>
        <text>Eliminative cleavage of (1-&gt;4)-alpha-D-galacturonan methyl ester to give oligosaccharides with 4-deoxy-6-O-methyl-alpha-D-galact-4-enuronosyl groups at their non-reducing ends.</text>
        <dbReference type="EC" id="4.2.2.10"/>
    </reaction>
</comment>
<comment type="subcellular location">
    <subcellularLocation>
        <location evidence="1">Secreted</location>
    </subcellularLocation>
</comment>
<comment type="similarity">
    <text evidence="3">Belongs to the polysaccharide lyase 1 family.</text>
</comment>
<protein>
    <recommendedName>
        <fullName>Probable pectin lyase C</fullName>
        <shortName>PLC</shortName>
        <ecNumber>4.2.2.10</ecNumber>
    </recommendedName>
</protein>
<dbReference type="EC" id="4.2.2.10"/>
<dbReference type="EMBL" id="AM270232">
    <property type="protein sequence ID" value="CAK48388.1"/>
    <property type="molecule type" value="Genomic_DNA"/>
</dbReference>
<dbReference type="RefSeq" id="XP_001394398.1">
    <property type="nucleotide sequence ID" value="XM_001394361.1"/>
</dbReference>
<dbReference type="SMR" id="A2QW65"/>
<dbReference type="CAZy" id="PL1">
    <property type="family name" value="Polysaccharide Lyase Family 1"/>
</dbReference>
<dbReference type="GlyCosmos" id="A2QW65">
    <property type="glycosylation" value="1 site, No reported glycans"/>
</dbReference>
<dbReference type="EnsemblFungi" id="CAK48388">
    <property type="protein sequence ID" value="CAK48388"/>
    <property type="gene ID" value="An11g04030"/>
</dbReference>
<dbReference type="GeneID" id="4984634"/>
<dbReference type="KEGG" id="ang:An11g04030"/>
<dbReference type="VEuPathDB" id="FungiDB:An11g04030"/>
<dbReference type="HOGENOM" id="CLU_021980_0_1_1"/>
<dbReference type="Proteomes" id="UP000006706">
    <property type="component" value="Chromosome 7R"/>
</dbReference>
<dbReference type="GO" id="GO:0005576">
    <property type="term" value="C:extracellular region"/>
    <property type="evidence" value="ECO:0007669"/>
    <property type="project" value="UniProtKB-SubCell"/>
</dbReference>
<dbReference type="GO" id="GO:0030570">
    <property type="term" value="F:pectate lyase activity"/>
    <property type="evidence" value="ECO:0007669"/>
    <property type="project" value="InterPro"/>
</dbReference>
<dbReference type="GO" id="GO:0047490">
    <property type="term" value="F:pectin lyase activity"/>
    <property type="evidence" value="ECO:0000250"/>
    <property type="project" value="UniProtKB"/>
</dbReference>
<dbReference type="GO" id="GO:0071555">
    <property type="term" value="P:cell wall organization"/>
    <property type="evidence" value="ECO:0007669"/>
    <property type="project" value="UniProtKB-KW"/>
</dbReference>
<dbReference type="GO" id="GO:0045490">
    <property type="term" value="P:pectin catabolic process"/>
    <property type="evidence" value="ECO:0000250"/>
    <property type="project" value="UniProtKB"/>
</dbReference>
<dbReference type="FunFam" id="2.160.20.10:FF:000003">
    <property type="entry name" value="Pectin lyase F"/>
    <property type="match status" value="1"/>
</dbReference>
<dbReference type="Gene3D" id="2.160.20.10">
    <property type="entry name" value="Single-stranded right-handed beta-helix, Pectin lyase-like"/>
    <property type="match status" value="1"/>
</dbReference>
<dbReference type="InterPro" id="IPR002022">
    <property type="entry name" value="Pec_lyase"/>
</dbReference>
<dbReference type="InterPro" id="IPR012334">
    <property type="entry name" value="Pectin_lyas_fold"/>
</dbReference>
<dbReference type="InterPro" id="IPR011050">
    <property type="entry name" value="Pectin_lyase_fold/virulence"/>
</dbReference>
<dbReference type="InterPro" id="IPR045032">
    <property type="entry name" value="PEL"/>
</dbReference>
<dbReference type="PANTHER" id="PTHR31683">
    <property type="entry name" value="PECTATE LYASE 18-RELATED"/>
    <property type="match status" value="1"/>
</dbReference>
<dbReference type="PANTHER" id="PTHR31683:SF16">
    <property type="entry name" value="PECTIN LYASE A-RELATED"/>
    <property type="match status" value="1"/>
</dbReference>
<dbReference type="Pfam" id="PF00544">
    <property type="entry name" value="Pectate_lyase_4"/>
    <property type="match status" value="1"/>
</dbReference>
<dbReference type="SMART" id="SM00656">
    <property type="entry name" value="Amb_all"/>
    <property type="match status" value="1"/>
</dbReference>
<dbReference type="SUPFAM" id="SSF51126">
    <property type="entry name" value="Pectin lyase-like"/>
    <property type="match status" value="1"/>
</dbReference>
<evidence type="ECO:0000250" key="1"/>
<evidence type="ECO:0000255" key="2"/>
<evidence type="ECO:0000305" key="3"/>
<organism>
    <name type="scientific">Aspergillus niger (strain ATCC MYA-4892 / CBS 513.88 / FGSC A1513)</name>
    <dbReference type="NCBI Taxonomy" id="425011"/>
    <lineage>
        <taxon>Eukaryota</taxon>
        <taxon>Fungi</taxon>
        <taxon>Dikarya</taxon>
        <taxon>Ascomycota</taxon>
        <taxon>Pezizomycotina</taxon>
        <taxon>Eurotiomycetes</taxon>
        <taxon>Eurotiomycetidae</taxon>
        <taxon>Eurotiales</taxon>
        <taxon>Aspergillaceae</taxon>
        <taxon>Aspergillus</taxon>
        <taxon>Aspergillus subgen. Circumdati</taxon>
    </lineage>
</organism>